<name>SYL_ACIC1</name>
<organism>
    <name type="scientific">Acidothermus cellulolyticus (strain ATCC 43068 / DSM 8971 / 11B)</name>
    <dbReference type="NCBI Taxonomy" id="351607"/>
    <lineage>
        <taxon>Bacteria</taxon>
        <taxon>Bacillati</taxon>
        <taxon>Actinomycetota</taxon>
        <taxon>Actinomycetes</taxon>
        <taxon>Acidothermales</taxon>
        <taxon>Acidothermaceae</taxon>
        <taxon>Acidothermus</taxon>
    </lineage>
</organism>
<proteinExistence type="inferred from homology"/>
<keyword id="KW-0030">Aminoacyl-tRNA synthetase</keyword>
<keyword id="KW-0067">ATP-binding</keyword>
<keyword id="KW-0963">Cytoplasm</keyword>
<keyword id="KW-0436">Ligase</keyword>
<keyword id="KW-0547">Nucleotide-binding</keyword>
<keyword id="KW-0648">Protein biosynthesis</keyword>
<keyword id="KW-1185">Reference proteome</keyword>
<gene>
    <name evidence="1" type="primary">leuS</name>
    <name type="ordered locus">Acel_0771</name>
</gene>
<feature type="chain" id="PRO_0000334724" description="Leucine--tRNA ligase">
    <location>
        <begin position="1"/>
        <end position="832"/>
    </location>
</feature>
<feature type="short sequence motif" description="'HIGH' region">
    <location>
        <begin position="58"/>
        <end position="68"/>
    </location>
</feature>
<feature type="short sequence motif" description="'KMSKS' region">
    <location>
        <begin position="598"/>
        <end position="602"/>
    </location>
</feature>
<feature type="binding site" evidence="1">
    <location>
        <position position="601"/>
    </location>
    <ligand>
        <name>ATP</name>
        <dbReference type="ChEBI" id="CHEBI:30616"/>
    </ligand>
</feature>
<sequence length="832" mass="92222">MAGLGSPLGRLTAVTSEIYDFAAIQARWLPVWTELDPFRASDDPSDPRERRYMLDMFPYPSGDLHMGHAEAFAIGDVVARYWFQRGYNVLHPIGWDAFGLPAENAAIQRNLHPADWTYRNIETQAASFRNYAISFDWSRRLHTCDPEYYKWTQWLFLRLFERGLAYRKASPVNWCPNDQTVLANEQVVGGTCERCGAQVTKKTLTQWYFRITEYAQRLLDDMALLEGRWPERVLTMQRNWIGRSEGAYVDFTIEGRAEPVTVFTTRPDTLYGATFFVIAADSPLAAEICAPEQRAAFEAYVDQVRRLSDIDRLSTERQKTGVFLGRYAVNPVNGERIPVWAADYVLADYGTGAIMAVPAHDQRDLDFALTYGLPVRVVVDTGEGDPAVTGVATEGDGVHINSGLIDGTDKAEGIARITRYLEDIGKGRAGVTYRLRDWLVSRQRFWGAPIPIVHCPGCGEVAVPDQDLPVLLPDLRGADLAPKGISPLAGAADWVQTTCPRCGGSAQRDTDTMDTFVDSSWYYLRYCSPHDPSQPFDVAKVRQWLPVHQYVGGVEHAILHLLYSRFITKVLHDMGLVDFVEPFSALLNQGQVINQGKAMSKSLGNGVDLGEQLATYGVDAVRLTMVFAGPPEEDIDWADMNPGALGKFLARVWRIAGEVTSPVGAPPKDGDPALRRVTHRTIREVTELVESFRFNVAVARVMELANALRKAIDTGPGPADPAVREGAEALAVMLSLFAPYTAEECWARLGHQPTVAKAGWPTPDPELLAQEEVTCVVQVNGKVRERLRVSPSISEEELRAAALAAPAVEKAIDGRPVQRIIVRAPKLVNVVV</sequence>
<accession>A0LSY4</accession>
<protein>
    <recommendedName>
        <fullName evidence="1">Leucine--tRNA ligase</fullName>
        <ecNumber evidence="1">6.1.1.4</ecNumber>
    </recommendedName>
    <alternativeName>
        <fullName evidence="1">Leucyl-tRNA synthetase</fullName>
        <shortName evidence="1">LeuRS</shortName>
    </alternativeName>
</protein>
<dbReference type="EC" id="6.1.1.4" evidence="1"/>
<dbReference type="EMBL" id="CP000481">
    <property type="protein sequence ID" value="ABK52544.1"/>
    <property type="molecule type" value="Genomic_DNA"/>
</dbReference>
<dbReference type="SMR" id="A0LSY4"/>
<dbReference type="FunCoup" id="A0LSY4">
    <property type="interactions" value="372"/>
</dbReference>
<dbReference type="STRING" id="351607.Acel_0771"/>
<dbReference type="KEGG" id="ace:Acel_0771"/>
<dbReference type="eggNOG" id="COG0495">
    <property type="taxonomic scope" value="Bacteria"/>
</dbReference>
<dbReference type="HOGENOM" id="CLU_004427_0_0_11"/>
<dbReference type="InParanoid" id="A0LSY4"/>
<dbReference type="OrthoDB" id="9810365at2"/>
<dbReference type="Proteomes" id="UP000008221">
    <property type="component" value="Chromosome"/>
</dbReference>
<dbReference type="GO" id="GO:0005829">
    <property type="term" value="C:cytosol"/>
    <property type="evidence" value="ECO:0007669"/>
    <property type="project" value="TreeGrafter"/>
</dbReference>
<dbReference type="GO" id="GO:0002161">
    <property type="term" value="F:aminoacyl-tRNA deacylase activity"/>
    <property type="evidence" value="ECO:0007669"/>
    <property type="project" value="InterPro"/>
</dbReference>
<dbReference type="GO" id="GO:0005524">
    <property type="term" value="F:ATP binding"/>
    <property type="evidence" value="ECO:0007669"/>
    <property type="project" value="UniProtKB-UniRule"/>
</dbReference>
<dbReference type="GO" id="GO:0004823">
    <property type="term" value="F:leucine-tRNA ligase activity"/>
    <property type="evidence" value="ECO:0007669"/>
    <property type="project" value="UniProtKB-UniRule"/>
</dbReference>
<dbReference type="GO" id="GO:0006429">
    <property type="term" value="P:leucyl-tRNA aminoacylation"/>
    <property type="evidence" value="ECO:0007669"/>
    <property type="project" value="UniProtKB-UniRule"/>
</dbReference>
<dbReference type="CDD" id="cd07958">
    <property type="entry name" value="Anticodon_Ia_Leu_BEm"/>
    <property type="match status" value="1"/>
</dbReference>
<dbReference type="CDD" id="cd00812">
    <property type="entry name" value="LeuRS_core"/>
    <property type="match status" value="1"/>
</dbReference>
<dbReference type="FunFam" id="1.10.730.10:FF:000002">
    <property type="entry name" value="Leucine--tRNA ligase"/>
    <property type="match status" value="1"/>
</dbReference>
<dbReference type="FunFam" id="3.40.50.620:FF:000003">
    <property type="entry name" value="Leucine--tRNA ligase"/>
    <property type="match status" value="1"/>
</dbReference>
<dbReference type="FunFam" id="3.40.50.620:FF:000056">
    <property type="entry name" value="Leucine--tRNA ligase"/>
    <property type="match status" value="1"/>
</dbReference>
<dbReference type="Gene3D" id="3.10.20.590">
    <property type="match status" value="1"/>
</dbReference>
<dbReference type="Gene3D" id="3.40.50.620">
    <property type="entry name" value="HUPs"/>
    <property type="match status" value="2"/>
</dbReference>
<dbReference type="Gene3D" id="1.10.730.10">
    <property type="entry name" value="Isoleucyl-tRNA Synthetase, Domain 1"/>
    <property type="match status" value="1"/>
</dbReference>
<dbReference type="Gene3D" id="3.90.740.10">
    <property type="entry name" value="Valyl/Leucyl/Isoleucyl-tRNA synthetase, editing domain"/>
    <property type="match status" value="1"/>
</dbReference>
<dbReference type="HAMAP" id="MF_00049_B">
    <property type="entry name" value="Leu_tRNA_synth_B"/>
    <property type="match status" value="1"/>
</dbReference>
<dbReference type="InterPro" id="IPR001412">
    <property type="entry name" value="aa-tRNA-synth_I_CS"/>
</dbReference>
<dbReference type="InterPro" id="IPR002300">
    <property type="entry name" value="aa-tRNA-synth_Ia"/>
</dbReference>
<dbReference type="InterPro" id="IPR002302">
    <property type="entry name" value="Leu-tRNA-ligase"/>
</dbReference>
<dbReference type="InterPro" id="IPR025709">
    <property type="entry name" value="Leu_tRNA-synth_edit"/>
</dbReference>
<dbReference type="InterPro" id="IPR013155">
    <property type="entry name" value="M/V/L/I-tRNA-synth_anticd-bd"/>
</dbReference>
<dbReference type="InterPro" id="IPR014729">
    <property type="entry name" value="Rossmann-like_a/b/a_fold"/>
</dbReference>
<dbReference type="InterPro" id="IPR009080">
    <property type="entry name" value="tRNAsynth_Ia_anticodon-bd"/>
</dbReference>
<dbReference type="InterPro" id="IPR009008">
    <property type="entry name" value="Val/Leu/Ile-tRNA-synth_edit"/>
</dbReference>
<dbReference type="NCBIfam" id="TIGR00396">
    <property type="entry name" value="leuS_bact"/>
    <property type="match status" value="1"/>
</dbReference>
<dbReference type="PANTHER" id="PTHR43740:SF2">
    <property type="entry name" value="LEUCINE--TRNA LIGASE, MITOCHONDRIAL"/>
    <property type="match status" value="1"/>
</dbReference>
<dbReference type="PANTHER" id="PTHR43740">
    <property type="entry name" value="LEUCYL-TRNA SYNTHETASE"/>
    <property type="match status" value="1"/>
</dbReference>
<dbReference type="Pfam" id="PF08264">
    <property type="entry name" value="Anticodon_1"/>
    <property type="match status" value="1"/>
</dbReference>
<dbReference type="Pfam" id="PF00133">
    <property type="entry name" value="tRNA-synt_1"/>
    <property type="match status" value="2"/>
</dbReference>
<dbReference type="Pfam" id="PF13603">
    <property type="entry name" value="tRNA-synt_1_2"/>
    <property type="match status" value="1"/>
</dbReference>
<dbReference type="PRINTS" id="PR00985">
    <property type="entry name" value="TRNASYNTHLEU"/>
</dbReference>
<dbReference type="SUPFAM" id="SSF47323">
    <property type="entry name" value="Anticodon-binding domain of a subclass of class I aminoacyl-tRNA synthetases"/>
    <property type="match status" value="1"/>
</dbReference>
<dbReference type="SUPFAM" id="SSF52374">
    <property type="entry name" value="Nucleotidylyl transferase"/>
    <property type="match status" value="1"/>
</dbReference>
<dbReference type="SUPFAM" id="SSF50677">
    <property type="entry name" value="ValRS/IleRS/LeuRS editing domain"/>
    <property type="match status" value="1"/>
</dbReference>
<dbReference type="PROSITE" id="PS00178">
    <property type="entry name" value="AA_TRNA_LIGASE_I"/>
    <property type="match status" value="1"/>
</dbReference>
<reference key="1">
    <citation type="journal article" date="2009" name="Genome Res.">
        <title>Complete genome of the cellulolytic thermophile Acidothermus cellulolyticus 11B provides insights into its ecophysiological and evolutionary adaptations.</title>
        <authorList>
            <person name="Barabote R.D."/>
            <person name="Xie G."/>
            <person name="Leu D.H."/>
            <person name="Normand P."/>
            <person name="Necsulea A."/>
            <person name="Daubin V."/>
            <person name="Medigue C."/>
            <person name="Adney W.S."/>
            <person name="Xu X.C."/>
            <person name="Lapidus A."/>
            <person name="Parales R.E."/>
            <person name="Detter C."/>
            <person name="Pujic P."/>
            <person name="Bruce D."/>
            <person name="Lavire C."/>
            <person name="Challacombe J.F."/>
            <person name="Brettin T.S."/>
            <person name="Berry A.M."/>
        </authorList>
    </citation>
    <scope>NUCLEOTIDE SEQUENCE [LARGE SCALE GENOMIC DNA]</scope>
    <source>
        <strain>ATCC 43068 / DSM 8971 / 11B</strain>
    </source>
</reference>
<evidence type="ECO:0000255" key="1">
    <source>
        <dbReference type="HAMAP-Rule" id="MF_00049"/>
    </source>
</evidence>
<comment type="catalytic activity">
    <reaction evidence="1">
        <text>tRNA(Leu) + L-leucine + ATP = L-leucyl-tRNA(Leu) + AMP + diphosphate</text>
        <dbReference type="Rhea" id="RHEA:11688"/>
        <dbReference type="Rhea" id="RHEA-COMP:9613"/>
        <dbReference type="Rhea" id="RHEA-COMP:9622"/>
        <dbReference type="ChEBI" id="CHEBI:30616"/>
        <dbReference type="ChEBI" id="CHEBI:33019"/>
        <dbReference type="ChEBI" id="CHEBI:57427"/>
        <dbReference type="ChEBI" id="CHEBI:78442"/>
        <dbReference type="ChEBI" id="CHEBI:78494"/>
        <dbReference type="ChEBI" id="CHEBI:456215"/>
        <dbReference type="EC" id="6.1.1.4"/>
    </reaction>
</comment>
<comment type="subcellular location">
    <subcellularLocation>
        <location evidence="1">Cytoplasm</location>
    </subcellularLocation>
</comment>
<comment type="similarity">
    <text evidence="1">Belongs to the class-I aminoacyl-tRNA synthetase family.</text>
</comment>